<accession>P46870</accession>
<proteinExistence type="evidence at transcript level"/>
<name>KLP1_CHLRE</name>
<protein>
    <recommendedName>
        <fullName>Kinesin-like protein KLP1</fullName>
    </recommendedName>
</protein>
<evidence type="ECO:0000255" key="1"/>
<evidence type="ECO:0000255" key="2">
    <source>
        <dbReference type="PROSITE-ProRule" id="PRU00283"/>
    </source>
</evidence>
<evidence type="ECO:0000256" key="3">
    <source>
        <dbReference type="SAM" id="MobiDB-lite"/>
    </source>
</evidence>
<dbReference type="EMBL" id="X78589">
    <property type="protein sequence ID" value="CAA55326.1"/>
    <property type="molecule type" value="mRNA"/>
</dbReference>
<dbReference type="PIR" id="A53953">
    <property type="entry name" value="A53953"/>
</dbReference>
<dbReference type="SMR" id="P46870"/>
<dbReference type="PaxDb" id="3055-EDP06592"/>
<dbReference type="ProMEX" id="P46870"/>
<dbReference type="eggNOG" id="KOG4280">
    <property type="taxonomic scope" value="Eukaryota"/>
</dbReference>
<dbReference type="GO" id="GO:0005737">
    <property type="term" value="C:cytoplasm"/>
    <property type="evidence" value="ECO:0007669"/>
    <property type="project" value="UniProtKB-KW"/>
</dbReference>
<dbReference type="GO" id="GO:0005874">
    <property type="term" value="C:microtubule"/>
    <property type="evidence" value="ECO:0007669"/>
    <property type="project" value="UniProtKB-KW"/>
</dbReference>
<dbReference type="GO" id="GO:0031514">
    <property type="term" value="C:motile cilium"/>
    <property type="evidence" value="ECO:0007669"/>
    <property type="project" value="UniProtKB-KW"/>
</dbReference>
<dbReference type="GO" id="GO:0005524">
    <property type="term" value="F:ATP binding"/>
    <property type="evidence" value="ECO:0007669"/>
    <property type="project" value="UniProtKB-KW"/>
</dbReference>
<dbReference type="GO" id="GO:0008017">
    <property type="term" value="F:microtubule binding"/>
    <property type="evidence" value="ECO:0007669"/>
    <property type="project" value="InterPro"/>
</dbReference>
<dbReference type="GO" id="GO:0003777">
    <property type="term" value="F:microtubule motor activity"/>
    <property type="evidence" value="ECO:0007669"/>
    <property type="project" value="InterPro"/>
</dbReference>
<dbReference type="GO" id="GO:0030030">
    <property type="term" value="P:cell projection organization"/>
    <property type="evidence" value="ECO:0007669"/>
    <property type="project" value="UniProtKB-KW"/>
</dbReference>
<dbReference type="GO" id="GO:0007018">
    <property type="term" value="P:microtubule-based movement"/>
    <property type="evidence" value="ECO:0007669"/>
    <property type="project" value="InterPro"/>
</dbReference>
<dbReference type="CDD" id="cd01375">
    <property type="entry name" value="KISc_KIF9_like"/>
    <property type="match status" value="1"/>
</dbReference>
<dbReference type="Gene3D" id="3.40.850.10">
    <property type="entry name" value="Kinesin motor domain"/>
    <property type="match status" value="1"/>
</dbReference>
<dbReference type="InterPro" id="IPR056524">
    <property type="entry name" value="KIF6/9_C"/>
</dbReference>
<dbReference type="InterPro" id="IPR027640">
    <property type="entry name" value="Kinesin-like_fam"/>
</dbReference>
<dbReference type="InterPro" id="IPR019821">
    <property type="entry name" value="Kinesin_motor_CS"/>
</dbReference>
<dbReference type="InterPro" id="IPR001752">
    <property type="entry name" value="Kinesin_motor_dom"/>
</dbReference>
<dbReference type="InterPro" id="IPR036961">
    <property type="entry name" value="Kinesin_motor_dom_sf"/>
</dbReference>
<dbReference type="InterPro" id="IPR027417">
    <property type="entry name" value="P-loop_NTPase"/>
</dbReference>
<dbReference type="PANTHER" id="PTHR47968">
    <property type="entry name" value="CENTROMERE PROTEIN E"/>
    <property type="match status" value="1"/>
</dbReference>
<dbReference type="PANTHER" id="PTHR47968:SF36">
    <property type="entry name" value="KINESIN HEAVY CHAIN ISOFORM X1"/>
    <property type="match status" value="1"/>
</dbReference>
<dbReference type="Pfam" id="PF23735">
    <property type="entry name" value="KIF9"/>
    <property type="match status" value="1"/>
</dbReference>
<dbReference type="Pfam" id="PF00225">
    <property type="entry name" value="Kinesin"/>
    <property type="match status" value="1"/>
</dbReference>
<dbReference type="PRINTS" id="PR00380">
    <property type="entry name" value="KINESINHEAVY"/>
</dbReference>
<dbReference type="SMART" id="SM00129">
    <property type="entry name" value="KISc"/>
    <property type="match status" value="1"/>
</dbReference>
<dbReference type="SUPFAM" id="SSF52540">
    <property type="entry name" value="P-loop containing nucleoside triphosphate hydrolases"/>
    <property type="match status" value="1"/>
</dbReference>
<dbReference type="PROSITE" id="PS00411">
    <property type="entry name" value="KINESIN_MOTOR_1"/>
    <property type="match status" value="1"/>
</dbReference>
<dbReference type="PROSITE" id="PS50067">
    <property type="entry name" value="KINESIN_MOTOR_2"/>
    <property type="match status" value="1"/>
</dbReference>
<organism>
    <name type="scientific">Chlamydomonas reinhardtii</name>
    <name type="common">Chlamydomonas smithii</name>
    <dbReference type="NCBI Taxonomy" id="3055"/>
    <lineage>
        <taxon>Eukaryota</taxon>
        <taxon>Viridiplantae</taxon>
        <taxon>Chlorophyta</taxon>
        <taxon>core chlorophytes</taxon>
        <taxon>Chlorophyceae</taxon>
        <taxon>CS clade</taxon>
        <taxon>Chlamydomonadales</taxon>
        <taxon>Chlamydomonadaceae</taxon>
        <taxon>Chlamydomonas</taxon>
    </lineage>
</organism>
<feature type="chain" id="PRO_0000125456" description="Kinesin-like protein KLP1">
    <location>
        <begin position="1"/>
        <end position="776"/>
    </location>
</feature>
<feature type="domain" description="Kinesin motor" evidence="2">
    <location>
        <begin position="5"/>
        <end position="335"/>
    </location>
</feature>
<feature type="region of interest" description="Disordered" evidence="3">
    <location>
        <begin position="441"/>
        <end position="535"/>
    </location>
</feature>
<feature type="region of interest" description="Globular" evidence="1">
    <location>
        <begin position="658"/>
        <end position="776"/>
    </location>
</feature>
<feature type="coiled-coil region" evidence="1">
    <location>
        <begin position="348"/>
        <end position="371"/>
    </location>
</feature>
<feature type="coiled-coil region" evidence="1">
    <location>
        <begin position="579"/>
        <end position="657"/>
    </location>
</feature>
<feature type="compositionally biased region" description="Low complexity" evidence="3">
    <location>
        <begin position="447"/>
        <end position="460"/>
    </location>
</feature>
<feature type="binding site" evidence="2">
    <location>
        <begin position="91"/>
        <end position="98"/>
    </location>
    <ligand>
        <name>ATP</name>
        <dbReference type="ChEBI" id="CHEBI:30616"/>
    </ligand>
</feature>
<comment type="function">
    <text>May play a role in rotation or twisting of the central pair microtubules of the flagella axoneme.</text>
</comment>
<comment type="subcellular location">
    <subcellularLocation>
        <location>Cytoplasm</location>
        <location>Cytoskeleton</location>
        <location>Flagellum axoneme</location>
    </subcellularLocation>
    <text>Bound to the central pair microtubule C2 or to projections that are attached to C2.</text>
</comment>
<comment type="similarity">
    <text evidence="2">Belongs to the TRAFAC class myosin-kinesin ATPase superfamily. Kinesin family.</text>
</comment>
<sequence length="776" mass="83020">MVKQAVKVFVRTRPTATSGSGLKLGPDGQSVSVNVPKDLSAGPVNNQQEQFSFKFDGVLENVSQEAAYTTLAHEVVDSLMAGYHGTIFAYGQTGAGKTFTMSGGGTAYAHRGLIPRAIHHVFREVDMRADKMYRVHVSYLEIYNEQLYDLLGDTPGTSDALAVLEDSNSNTYVRGLTLVPVRSEEEALAQFFLGEQGRTTAGHVLNAESSRSHTVFTIHVEMRTSDAASERAVLSKLNLVDLAGSERTKKTGVTGQTLKEAQFINRSLSFLEQTVNALSRKDTYVPFRQTKLTAVLRDALGGNCKTVMVANIWAEPSHNEETLSTLRFASRVRTLTTDLALNESNDPALLLRRYERQIKELKAELAMRDTLSGKGRVSYDDLTDDELRELHATCRRFLHGEAEPEDLPADSMKRVRETFKALRAVHVAIKADMATQMATLRRATEEGSGAAARGGDSAGPSGVGDVDLRATGGFTVGHAPLDARPPVRSELGSPGAGASGAEALGEPRSPGGGLHAQASSHTDAGSNWGDAGPLSSPGGTRLAGIFGVSGDRNAVFRRYKVDVGEGRELAASLKAASIALADTKASIRSLGASVNDAKQRIDELSSALALRRGATPAGGDGEVLDSEAYALMQELKSAKSRYRTDFDSLKSAREELEPQIQAVAVARAGLLEAFDRWAAAQSDTTLKRMATAGRAMSGIAPGEEDEMDAGEQFERMQIARISERDPDSLAFHTALKRTGAAVSRPATVATGGNAKAAAMATRKMEHTQAVNRGLAR</sequence>
<reference key="1">
    <citation type="journal article" date="1994" name="J. Cell Biol.">
        <title>A new kinesin-like protein (Klp1) localized to a single microtubule of the Chlamydomonas flagellum.</title>
        <authorList>
            <person name="Bernstein M."/>
            <person name="Beech P.L."/>
            <person name="Katz S.G."/>
            <person name="Rosenbaum J.L."/>
        </authorList>
    </citation>
    <scope>NUCLEOTIDE SEQUENCE [MRNA]</scope>
    <source>
        <strain>21gr / CC-1690</strain>
    </source>
</reference>
<gene>
    <name type="primary">KLP1</name>
</gene>
<keyword id="KW-0067">ATP-binding</keyword>
<keyword id="KW-0966">Cell projection</keyword>
<keyword id="KW-0969">Cilium</keyword>
<keyword id="KW-0970">Cilium biogenesis/degradation</keyword>
<keyword id="KW-0175">Coiled coil</keyword>
<keyword id="KW-0963">Cytoplasm</keyword>
<keyword id="KW-0206">Cytoskeleton</keyword>
<keyword id="KW-0282">Flagellum</keyword>
<keyword id="KW-0493">Microtubule</keyword>
<keyword id="KW-0505">Motor protein</keyword>
<keyword id="KW-0547">Nucleotide-binding</keyword>